<feature type="chain" id="PRO_0000183776" description="Cytochrome c oxidase subunit 3">
    <location>
        <begin position="1"/>
        <end position="261"/>
    </location>
</feature>
<feature type="topological domain" description="Mitochondrial matrix" evidence="1">
    <location>
        <begin position="1"/>
        <end position="15"/>
    </location>
</feature>
<feature type="transmembrane region" description="Helical; Name=I" evidence="1">
    <location>
        <begin position="16"/>
        <end position="34"/>
    </location>
</feature>
<feature type="topological domain" description="Mitochondrial intermembrane" evidence="1">
    <location>
        <begin position="35"/>
        <end position="40"/>
    </location>
</feature>
<feature type="transmembrane region" description="Helical; Name=II" evidence="1">
    <location>
        <begin position="41"/>
        <end position="66"/>
    </location>
</feature>
<feature type="topological domain" description="Mitochondrial matrix" evidence="1">
    <location>
        <begin position="67"/>
        <end position="72"/>
    </location>
</feature>
<feature type="transmembrane region" description="Helical; Name=III" evidence="1">
    <location>
        <begin position="73"/>
        <end position="105"/>
    </location>
</feature>
<feature type="topological domain" description="Mitochondrial intermembrane" evidence="1">
    <location>
        <begin position="106"/>
        <end position="128"/>
    </location>
</feature>
<feature type="transmembrane region" description="Helical; Name=IV" evidence="1">
    <location>
        <begin position="129"/>
        <end position="152"/>
    </location>
</feature>
<feature type="topological domain" description="Mitochondrial matrix" evidence="1">
    <location>
        <begin position="153"/>
        <end position="155"/>
    </location>
</feature>
<feature type="transmembrane region" description="Helical; Name=V" evidence="1">
    <location>
        <begin position="156"/>
        <end position="183"/>
    </location>
</feature>
<feature type="topological domain" description="Mitochondrial intermembrane" evidence="1">
    <location>
        <begin position="184"/>
        <end position="190"/>
    </location>
</feature>
<feature type="transmembrane region" description="Helical; Name=VI" evidence="1">
    <location>
        <begin position="191"/>
        <end position="223"/>
    </location>
</feature>
<feature type="topological domain" description="Mitochondrial matrix" evidence="1">
    <location>
        <begin position="224"/>
        <end position="232"/>
    </location>
</feature>
<feature type="transmembrane region" description="Helical; Name=VII" evidence="1">
    <location>
        <begin position="233"/>
        <end position="256"/>
    </location>
</feature>
<feature type="topological domain" description="Mitochondrial intermembrane" evidence="1">
    <location>
        <begin position="257"/>
        <end position="261"/>
    </location>
</feature>
<accession>O47708</accession>
<comment type="function">
    <text evidence="2">Component of the cytochrome c oxidase, the last enzyme in the mitochondrial electron transport chain which drives oxidative phosphorylation. The respiratory chain contains 3 multisubunit complexes succinate dehydrogenase (complex II, CII), ubiquinol-cytochrome c oxidoreductase (cytochrome b-c1 complex, complex III, CIII) and cytochrome c oxidase (complex IV, CIV), that cooperate to transfer electrons derived from NADH and succinate to molecular oxygen, creating an electrochemical gradient over the inner membrane that drives transmembrane transport and the ATP synthase. Cytochrome c oxidase is the component of the respiratory chain that catalyzes the reduction of oxygen to water. Electrons originating from reduced cytochrome c in the intermembrane space (IMS) are transferred via the dinuclear copper A center (CU(A)) of subunit 2 and heme A of subunit 1 to the active site in subunit 1, a binuclear center (BNC) formed by heme A3 and copper B (CU(B)). The BNC reduces molecular oxygen to 2 water molecules using 4 electrons from cytochrome c in the IMS and 4 protons from the mitochondrial matrix.</text>
</comment>
<comment type="catalytic activity">
    <reaction evidence="2">
        <text>4 Fe(II)-[cytochrome c] + O2 + 8 H(+)(in) = 4 Fe(III)-[cytochrome c] + 2 H2O + 4 H(+)(out)</text>
        <dbReference type="Rhea" id="RHEA:11436"/>
        <dbReference type="Rhea" id="RHEA-COMP:10350"/>
        <dbReference type="Rhea" id="RHEA-COMP:14399"/>
        <dbReference type="ChEBI" id="CHEBI:15377"/>
        <dbReference type="ChEBI" id="CHEBI:15378"/>
        <dbReference type="ChEBI" id="CHEBI:15379"/>
        <dbReference type="ChEBI" id="CHEBI:29033"/>
        <dbReference type="ChEBI" id="CHEBI:29034"/>
        <dbReference type="EC" id="7.1.1.9"/>
    </reaction>
    <physiologicalReaction direction="left-to-right" evidence="2">
        <dbReference type="Rhea" id="RHEA:11437"/>
    </physiologicalReaction>
</comment>
<comment type="subunit">
    <text evidence="1">Component of the cytochrome c oxidase (complex IV, CIV), a multisubunit enzyme composed of 14 subunits. The complex is composed of a catalytic core of 3 subunits MT-CO1, MT-CO2 and MT-CO3, encoded in the mitochondrial DNA, and 11 supernumerary subunits COX4I, COX5A, COX5B, COX6A, COX6B, COX6C, COX7A, COX7B, COX7C, COX8 and NDUFA4, which are encoded in the nuclear genome. The complex exists as a monomer or a dimer and forms supercomplexes (SCs) in the inner mitochondrial membrane with NADH-ubiquinone oxidoreductase (complex I, CI) and ubiquinol-cytochrome c oxidoreductase (cytochrome b-c1 complex, complex III, CIII), resulting in different assemblies (supercomplex SCI(1)III(2)IV(1) and megacomplex MCI(2)III(2)IV(2)).</text>
</comment>
<comment type="subcellular location">
    <subcellularLocation>
        <location evidence="1">Mitochondrion inner membrane</location>
        <topology evidence="1">Multi-pass membrane protein</topology>
    </subcellularLocation>
</comment>
<comment type="similarity">
    <text evidence="3">Belongs to the cytochrome c oxidase subunit 3 family.</text>
</comment>
<geneLocation type="mitochondrion"/>
<organism>
    <name type="scientific">Gazella cuvieri</name>
    <name type="common">Cuvier's gazelle</name>
    <name type="synonym">Edmi gazelle</name>
    <dbReference type="NCBI Taxonomy" id="69301"/>
    <lineage>
        <taxon>Eukaryota</taxon>
        <taxon>Metazoa</taxon>
        <taxon>Chordata</taxon>
        <taxon>Craniata</taxon>
        <taxon>Vertebrata</taxon>
        <taxon>Euteleostomi</taxon>
        <taxon>Mammalia</taxon>
        <taxon>Eutheria</taxon>
        <taxon>Laurasiatheria</taxon>
        <taxon>Artiodactyla</taxon>
        <taxon>Ruminantia</taxon>
        <taxon>Pecora</taxon>
        <taxon>Bovidae</taxon>
        <taxon>Antilopinae</taxon>
        <taxon>Gazella</taxon>
    </lineage>
</organism>
<protein>
    <recommendedName>
        <fullName>Cytochrome c oxidase subunit 3</fullName>
        <ecNumber>7.1.1.9</ecNumber>
    </recommendedName>
    <alternativeName>
        <fullName>Cytochrome c oxidase polypeptide III</fullName>
    </alternativeName>
</protein>
<gene>
    <name type="primary">MT-CO3</name>
    <name type="synonym">COIII</name>
    <name type="synonym">COXIII</name>
    <name type="synonym">MTCO3</name>
</gene>
<name>COX3_GAZCU</name>
<evidence type="ECO:0000250" key="1">
    <source>
        <dbReference type="UniProtKB" id="P00415"/>
    </source>
</evidence>
<evidence type="ECO:0000250" key="2">
    <source>
        <dbReference type="UniProtKB" id="P00420"/>
    </source>
</evidence>
<evidence type="ECO:0000305" key="3"/>
<dbReference type="EC" id="7.1.1.9"/>
<dbReference type="EMBL" id="AF030475">
    <property type="protein sequence ID" value="AAB93614.1"/>
    <property type="molecule type" value="Genomic_DNA"/>
</dbReference>
<dbReference type="SMR" id="O47708"/>
<dbReference type="GO" id="GO:0005743">
    <property type="term" value="C:mitochondrial inner membrane"/>
    <property type="evidence" value="ECO:0007669"/>
    <property type="project" value="UniProtKB-SubCell"/>
</dbReference>
<dbReference type="GO" id="GO:0045277">
    <property type="term" value="C:respiratory chain complex IV"/>
    <property type="evidence" value="ECO:0000250"/>
    <property type="project" value="UniProtKB"/>
</dbReference>
<dbReference type="GO" id="GO:0004129">
    <property type="term" value="F:cytochrome-c oxidase activity"/>
    <property type="evidence" value="ECO:0007669"/>
    <property type="project" value="UniProtKB-EC"/>
</dbReference>
<dbReference type="GO" id="GO:0006123">
    <property type="term" value="P:mitochondrial electron transport, cytochrome c to oxygen"/>
    <property type="evidence" value="ECO:0007669"/>
    <property type="project" value="TreeGrafter"/>
</dbReference>
<dbReference type="GO" id="GO:0008535">
    <property type="term" value="P:respiratory chain complex IV assembly"/>
    <property type="evidence" value="ECO:0000250"/>
    <property type="project" value="UniProtKB"/>
</dbReference>
<dbReference type="CDD" id="cd01665">
    <property type="entry name" value="Cyt_c_Oxidase_III"/>
    <property type="match status" value="1"/>
</dbReference>
<dbReference type="FunFam" id="1.10.287.70:FF:000048">
    <property type="entry name" value="Cytochrome c oxidase subunit 3"/>
    <property type="match status" value="1"/>
</dbReference>
<dbReference type="FunFam" id="1.20.120.80:FF:000002">
    <property type="entry name" value="Cytochrome c oxidase subunit 3"/>
    <property type="match status" value="1"/>
</dbReference>
<dbReference type="Gene3D" id="1.10.287.70">
    <property type="match status" value="1"/>
</dbReference>
<dbReference type="Gene3D" id="1.20.120.80">
    <property type="entry name" value="Cytochrome c oxidase, subunit III, four-helix bundle"/>
    <property type="match status" value="1"/>
</dbReference>
<dbReference type="InterPro" id="IPR024791">
    <property type="entry name" value="Cyt_c/ubiquinol_Oxase_su3"/>
</dbReference>
<dbReference type="InterPro" id="IPR033945">
    <property type="entry name" value="Cyt_c_oxase_su3_dom"/>
</dbReference>
<dbReference type="InterPro" id="IPR000298">
    <property type="entry name" value="Cyt_c_oxidase-like_su3"/>
</dbReference>
<dbReference type="InterPro" id="IPR035973">
    <property type="entry name" value="Cyt_c_oxidase_su3-like_sf"/>
</dbReference>
<dbReference type="InterPro" id="IPR013833">
    <property type="entry name" value="Cyt_c_oxidase_su3_a-hlx"/>
</dbReference>
<dbReference type="PANTHER" id="PTHR11403:SF7">
    <property type="entry name" value="CYTOCHROME C OXIDASE SUBUNIT 3"/>
    <property type="match status" value="1"/>
</dbReference>
<dbReference type="PANTHER" id="PTHR11403">
    <property type="entry name" value="CYTOCHROME C OXIDASE SUBUNIT III"/>
    <property type="match status" value="1"/>
</dbReference>
<dbReference type="Pfam" id="PF00510">
    <property type="entry name" value="COX3"/>
    <property type="match status" value="1"/>
</dbReference>
<dbReference type="SUPFAM" id="SSF81452">
    <property type="entry name" value="Cytochrome c oxidase subunit III-like"/>
    <property type="match status" value="1"/>
</dbReference>
<dbReference type="PROSITE" id="PS50253">
    <property type="entry name" value="COX3"/>
    <property type="match status" value="1"/>
</dbReference>
<sequence>MTHQTHAYHMVNPSPWPLTGALSALLMTSGLIMWFHFNSTTLLMLGLTTNMLTMYQWWRDVVRESTFQGHHTPNVQKGLRYGMILFIISEVLFFTGFFWAFYHSSLAPTPELGGCWPPTGIHPLNPLEVPLLNTSVLLASGVSITWAHHSLMEGNRNHMLQALFITIALGVYFTLLQASEYYEAPFTISDGVYGSTFFVATGFHGLHVIIGSTFLIVCFFRQLKFHFTSNHHFGFEAAAWYWHFVDVVWLFLYVSIYWWGS</sequence>
<proteinExistence type="inferred from homology"/>
<keyword id="KW-0472">Membrane</keyword>
<keyword id="KW-0496">Mitochondrion</keyword>
<keyword id="KW-0999">Mitochondrion inner membrane</keyword>
<keyword id="KW-1278">Translocase</keyword>
<keyword id="KW-0812">Transmembrane</keyword>
<keyword id="KW-1133">Transmembrane helix</keyword>
<reference key="1">
    <citation type="journal article" date="1999" name="Mol. Phylogenet. Evol.">
        <title>Phylogenetic relationships in the bovid subfamily Antilopinae based on mitochondrial DNA sequences.</title>
        <authorList>
            <person name="Rebholz W.E.R."/>
            <person name="Harley E.H."/>
        </authorList>
    </citation>
    <scope>NUCLEOTIDE SEQUENCE [GENOMIC DNA]</scope>
</reference>